<feature type="peptide" id="PRO_0000024937" description="Corticotropin">
    <location>
        <begin position="1"/>
        <end position="39"/>
    </location>
</feature>
<feature type="peptide" id="PRO_0000024938" description="Melanocyte-stimulating hormone alpha">
    <location>
        <begin position="1"/>
        <end position="13"/>
    </location>
</feature>
<feature type="peptide" id="PRO_0000024939" description="Corticotropin-like intermediary peptide">
    <location>
        <begin position="19"/>
        <end position="39"/>
    </location>
</feature>
<feature type="modified residue" description="N-acetylserine" evidence="3">
    <location>
        <position position="1"/>
    </location>
</feature>
<feature type="modified residue" description="Valine amide" evidence="2">
    <location>
        <position position="13"/>
    </location>
</feature>
<feature type="modified residue" description="Phosphoserine" evidence="1">
    <location>
        <position position="31"/>
    </location>
</feature>
<feature type="non-terminal residue">
    <location>
        <position position="1"/>
    </location>
</feature>
<feature type="non-terminal residue">
    <location>
        <position position="39"/>
    </location>
</feature>
<feature type="strand" evidence="6">
    <location>
        <begin position="6"/>
        <end position="11"/>
    </location>
</feature>
<feature type="strand" evidence="6">
    <location>
        <begin position="13"/>
        <end position="15"/>
    </location>
</feature>
<dbReference type="PIR" id="PN0127">
    <property type="entry name" value="PN0127"/>
</dbReference>
<dbReference type="PDB" id="8GY7">
    <property type="method" value="EM"/>
    <property type="resolution" value="3.30 A"/>
    <property type="chains" value="M=1-18"/>
</dbReference>
<dbReference type="PDBsum" id="8GY7"/>
<dbReference type="EMDB" id="EMD-34371"/>
<dbReference type="SMR" id="P68000"/>
<dbReference type="GO" id="GO:0005615">
    <property type="term" value="C:extracellular space"/>
    <property type="evidence" value="ECO:0007669"/>
    <property type="project" value="TreeGrafter"/>
</dbReference>
<dbReference type="GO" id="GO:0030141">
    <property type="term" value="C:secretory granule"/>
    <property type="evidence" value="ECO:0007669"/>
    <property type="project" value="TreeGrafter"/>
</dbReference>
<dbReference type="GO" id="GO:0001664">
    <property type="term" value="F:G protein-coupled receptor binding"/>
    <property type="evidence" value="ECO:0007669"/>
    <property type="project" value="TreeGrafter"/>
</dbReference>
<dbReference type="GO" id="GO:0005179">
    <property type="term" value="F:hormone activity"/>
    <property type="evidence" value="ECO:0007669"/>
    <property type="project" value="UniProtKB-KW"/>
</dbReference>
<dbReference type="GO" id="GO:2000852">
    <property type="term" value="P:regulation of corticosterone secretion"/>
    <property type="evidence" value="ECO:0007669"/>
    <property type="project" value="TreeGrafter"/>
</dbReference>
<dbReference type="InterPro" id="IPR013531">
    <property type="entry name" value="Mcrtin_ACTH_cent"/>
</dbReference>
<dbReference type="InterPro" id="IPR001941">
    <property type="entry name" value="PMOC"/>
</dbReference>
<dbReference type="InterPro" id="IPR050878">
    <property type="entry name" value="POMC-derived_peptides"/>
</dbReference>
<dbReference type="PANTHER" id="PTHR11416">
    <property type="entry name" value="PRO-OPIOMELANOCORTIN"/>
    <property type="match status" value="1"/>
</dbReference>
<dbReference type="PANTHER" id="PTHR11416:SF7">
    <property type="entry name" value="PRO-OPIOMELANOCORTIN"/>
    <property type="match status" value="1"/>
</dbReference>
<dbReference type="Pfam" id="PF00976">
    <property type="entry name" value="ACTH_domain"/>
    <property type="match status" value="1"/>
</dbReference>
<dbReference type="PRINTS" id="PR00383">
    <property type="entry name" value="MELANOCORTIN"/>
</dbReference>
<dbReference type="SMART" id="SM01363">
    <property type="entry name" value="ACTH_domain"/>
    <property type="match status" value="1"/>
</dbReference>
<accession>P68000</accession>
<accession>P01195</accession>
<reference key="1">
    <citation type="journal article" date="1977" name="Biokhimiia">
        <title>Amino acid sequence of corticotropins from seiwhale (Balaenoptera borealis) and pinwhale (Balaenoptera physalus).</title>
        <authorList>
            <person name="Pankov Y.A."/>
            <person name="Nikolaeva O.P."/>
            <person name="Elizarova G.P."/>
        </authorList>
    </citation>
    <scope>PROTEIN SEQUENCE</scope>
</reference>
<protein>
    <recommendedName>
        <fullName>Pro-opiomelanocortin</fullName>
        <shortName>POMC</shortName>
    </recommendedName>
    <alternativeName>
        <fullName>Corticotropin-lipotropin</fullName>
    </alternativeName>
    <component>
        <recommendedName>
            <fullName>Corticotropin</fullName>
        </recommendedName>
        <alternativeName>
            <fullName>Adrenocorticotropic hormone</fullName>
            <shortName>ACTH</shortName>
        </alternativeName>
    </component>
    <component>
        <recommendedName>
            <fullName>Melanocyte-stimulating hormone alpha</fullName>
            <shortName>Alpha-MSH</shortName>
        </recommendedName>
        <alternativeName>
            <fullName>Melanotropin alpha</fullName>
        </alternativeName>
    </component>
    <component>
        <recommendedName>
            <fullName>Corticotropin-like intermediary peptide</fullName>
            <shortName>CLIP</shortName>
        </recommendedName>
    </component>
</protein>
<sequence>SYSMEHFRWGKPVGKKRRPVKVYPNGAEDESAEAFPLEF</sequence>
<name>COLI_BALBO</name>
<keyword id="KW-0002">3D-structure</keyword>
<keyword id="KW-0007">Acetylation</keyword>
<keyword id="KW-0027">Amidation</keyword>
<keyword id="KW-0165">Cleavage on pair of basic residues</keyword>
<keyword id="KW-0903">Direct protein sequencing</keyword>
<keyword id="KW-0372">Hormone</keyword>
<keyword id="KW-0597">Phosphoprotein</keyword>
<keyword id="KW-0964">Secreted</keyword>
<comment type="function">
    <text>Precursor protein for pituitary hormones that regulate stress and environmental adaptation.</text>
</comment>
<comment type="function">
    <molecule>Corticotropin</molecule>
    <text>Stimulates the adrenal glands to release cortisol.</text>
</comment>
<comment type="function">
    <molecule>Melanocyte-stimulating hormone alpha</molecule>
    <text>Anorexigenic peptide. Increases the pigmentation of skin by increasing melanin production in melanocytes.</text>
</comment>
<comment type="subcellular location">
    <subcellularLocation>
        <location evidence="4">Secreted</location>
    </subcellularLocation>
</comment>
<comment type="similarity">
    <text evidence="5">Belongs to the POMC family.</text>
</comment>
<organism>
    <name type="scientific">Balaenoptera borealis</name>
    <name type="common">Sei whale</name>
    <name type="synonym">Pollack whale</name>
    <dbReference type="NCBI Taxonomy" id="9768"/>
    <lineage>
        <taxon>Eukaryota</taxon>
        <taxon>Metazoa</taxon>
        <taxon>Chordata</taxon>
        <taxon>Craniata</taxon>
        <taxon>Vertebrata</taxon>
        <taxon>Euteleostomi</taxon>
        <taxon>Mammalia</taxon>
        <taxon>Eutheria</taxon>
        <taxon>Laurasiatheria</taxon>
        <taxon>Artiodactyla</taxon>
        <taxon>Whippomorpha</taxon>
        <taxon>Cetacea</taxon>
        <taxon>Mysticeti</taxon>
        <taxon>Balaenopteridae</taxon>
        <taxon>Balaenoptera</taxon>
    </lineage>
</organism>
<evidence type="ECO:0000250" key="1">
    <source>
        <dbReference type="UniProtKB" id="P01189"/>
    </source>
</evidence>
<evidence type="ECO:0000250" key="2">
    <source>
        <dbReference type="UniProtKB" id="P01190"/>
    </source>
</evidence>
<evidence type="ECO:0000250" key="3">
    <source>
        <dbReference type="UniProtKB" id="P01191"/>
    </source>
</evidence>
<evidence type="ECO:0000250" key="4">
    <source>
        <dbReference type="UniProtKB" id="P01193"/>
    </source>
</evidence>
<evidence type="ECO:0000305" key="5"/>
<evidence type="ECO:0007829" key="6">
    <source>
        <dbReference type="PDB" id="8GY7"/>
    </source>
</evidence>
<gene>
    <name type="primary">POMC</name>
</gene>
<proteinExistence type="evidence at protein level"/>